<keyword id="KW-0066">ATP synthesis</keyword>
<keyword id="KW-0997">Cell inner membrane</keyword>
<keyword id="KW-1003">Cell membrane</keyword>
<keyword id="KW-0138">CF(0)</keyword>
<keyword id="KW-0375">Hydrogen ion transport</keyword>
<keyword id="KW-0406">Ion transport</keyword>
<keyword id="KW-0472">Membrane</keyword>
<keyword id="KW-0812">Transmembrane</keyword>
<keyword id="KW-1133">Transmembrane helix</keyword>
<keyword id="KW-0813">Transport</keyword>
<dbReference type="EMBL" id="CP001029">
    <property type="protein sequence ID" value="ACB81518.1"/>
    <property type="molecule type" value="Genomic_DNA"/>
</dbReference>
<dbReference type="SMR" id="B1ZJN2"/>
<dbReference type="STRING" id="441620.Mpop_3367"/>
<dbReference type="KEGG" id="mpo:Mpop_3367"/>
<dbReference type="eggNOG" id="COG0711">
    <property type="taxonomic scope" value="Bacteria"/>
</dbReference>
<dbReference type="HOGENOM" id="CLU_079215_6_1_5"/>
<dbReference type="Proteomes" id="UP000007136">
    <property type="component" value="Chromosome"/>
</dbReference>
<dbReference type="GO" id="GO:0005886">
    <property type="term" value="C:plasma membrane"/>
    <property type="evidence" value="ECO:0007669"/>
    <property type="project" value="UniProtKB-SubCell"/>
</dbReference>
<dbReference type="GO" id="GO:0045259">
    <property type="term" value="C:proton-transporting ATP synthase complex"/>
    <property type="evidence" value="ECO:0007669"/>
    <property type="project" value="UniProtKB-KW"/>
</dbReference>
<dbReference type="GO" id="GO:0046933">
    <property type="term" value="F:proton-transporting ATP synthase activity, rotational mechanism"/>
    <property type="evidence" value="ECO:0007669"/>
    <property type="project" value="UniProtKB-UniRule"/>
</dbReference>
<dbReference type="GO" id="GO:0046961">
    <property type="term" value="F:proton-transporting ATPase activity, rotational mechanism"/>
    <property type="evidence" value="ECO:0007669"/>
    <property type="project" value="TreeGrafter"/>
</dbReference>
<dbReference type="CDD" id="cd06503">
    <property type="entry name" value="ATP-synt_Fo_b"/>
    <property type="match status" value="1"/>
</dbReference>
<dbReference type="HAMAP" id="MF_01398">
    <property type="entry name" value="ATP_synth_b_bprime"/>
    <property type="match status" value="1"/>
</dbReference>
<dbReference type="InterPro" id="IPR002146">
    <property type="entry name" value="ATP_synth_b/b'su_bac/chlpt"/>
</dbReference>
<dbReference type="InterPro" id="IPR050059">
    <property type="entry name" value="ATP_synthase_B_chain"/>
</dbReference>
<dbReference type="PANTHER" id="PTHR33445:SF1">
    <property type="entry name" value="ATP SYNTHASE SUBUNIT B"/>
    <property type="match status" value="1"/>
</dbReference>
<dbReference type="PANTHER" id="PTHR33445">
    <property type="entry name" value="ATP SYNTHASE SUBUNIT B', CHLOROPLASTIC"/>
    <property type="match status" value="1"/>
</dbReference>
<dbReference type="Pfam" id="PF00430">
    <property type="entry name" value="ATP-synt_B"/>
    <property type="match status" value="1"/>
</dbReference>
<comment type="function">
    <text evidence="1">F(1)F(0) ATP synthase produces ATP from ADP in the presence of a proton or sodium gradient. F-type ATPases consist of two structural domains, F(1) containing the extramembraneous catalytic core and F(0) containing the membrane proton channel, linked together by a central stalk and a peripheral stalk. During catalysis, ATP synthesis in the catalytic domain of F(1) is coupled via a rotary mechanism of the central stalk subunits to proton translocation.</text>
</comment>
<comment type="function">
    <text evidence="1">Component of the F(0) channel, it forms part of the peripheral stalk, linking F(1) to F(0).</text>
</comment>
<comment type="subunit">
    <text evidence="1">F-type ATPases have 2 components, F(1) - the catalytic core - and F(0) - the membrane proton channel. F(1) has five subunits: alpha(3), beta(3), gamma(1), delta(1), epsilon(1). F(0) has three main subunits: a(1), b(2) and c(10-14). The alpha and beta chains form an alternating ring which encloses part of the gamma chain. F(1) is attached to F(0) by a central stalk formed by the gamma and epsilon chains, while a peripheral stalk is formed by the delta and b chains.</text>
</comment>
<comment type="subcellular location">
    <subcellularLocation>
        <location evidence="1">Cell inner membrane</location>
        <topology evidence="1">Single-pass membrane protein</topology>
    </subcellularLocation>
</comment>
<comment type="similarity">
    <text evidence="1">Belongs to the ATPase B chain family.</text>
</comment>
<protein>
    <recommendedName>
        <fullName evidence="1">ATP synthase subunit b 1</fullName>
    </recommendedName>
    <alternativeName>
        <fullName evidence="1">ATP synthase F(0) sector subunit b 1</fullName>
    </alternativeName>
    <alternativeName>
        <fullName evidence="1">ATPase subunit I 1</fullName>
    </alternativeName>
    <alternativeName>
        <fullName evidence="1">F-type ATPase subunit b 1</fullName>
        <shortName evidence="1">F-ATPase subunit b 1</shortName>
    </alternativeName>
</protein>
<name>ATPF1_METPB</name>
<feature type="chain" id="PRO_0000368586" description="ATP synthase subunit b 1">
    <location>
        <begin position="1"/>
        <end position="162"/>
    </location>
</feature>
<feature type="transmembrane region" description="Helical" evidence="1">
    <location>
        <begin position="1"/>
        <end position="21"/>
    </location>
</feature>
<proteinExistence type="inferred from homology"/>
<sequence>MLLTAEFWVAVAFVAFLVIVWRVGGFSMMTSGLDSRAKRVRHELDEARRLREEAAAVLADYKRRRTEAEREAEAIVAGAREDAERIAAEGHARLNDFVARRTKAAEAKIAQAEAQASAQVRAAAADAAVKVSETLLRERLQGGAAQDLVRASLGDVKSRLQA</sequence>
<organism>
    <name type="scientific">Methylorubrum populi (strain ATCC BAA-705 / NCIMB 13946 / BJ001)</name>
    <name type="common">Methylobacterium populi</name>
    <dbReference type="NCBI Taxonomy" id="441620"/>
    <lineage>
        <taxon>Bacteria</taxon>
        <taxon>Pseudomonadati</taxon>
        <taxon>Pseudomonadota</taxon>
        <taxon>Alphaproteobacteria</taxon>
        <taxon>Hyphomicrobiales</taxon>
        <taxon>Methylobacteriaceae</taxon>
        <taxon>Methylorubrum</taxon>
    </lineage>
</organism>
<evidence type="ECO:0000255" key="1">
    <source>
        <dbReference type="HAMAP-Rule" id="MF_01398"/>
    </source>
</evidence>
<reference key="1">
    <citation type="submission" date="2008-04" db="EMBL/GenBank/DDBJ databases">
        <title>Complete sequence of chromosome of Methylobacterium populi BJ001.</title>
        <authorList>
            <consortium name="US DOE Joint Genome Institute"/>
            <person name="Copeland A."/>
            <person name="Lucas S."/>
            <person name="Lapidus A."/>
            <person name="Glavina del Rio T."/>
            <person name="Dalin E."/>
            <person name="Tice H."/>
            <person name="Bruce D."/>
            <person name="Goodwin L."/>
            <person name="Pitluck S."/>
            <person name="Chertkov O."/>
            <person name="Brettin T."/>
            <person name="Detter J.C."/>
            <person name="Han C."/>
            <person name="Kuske C.R."/>
            <person name="Schmutz J."/>
            <person name="Larimer F."/>
            <person name="Land M."/>
            <person name="Hauser L."/>
            <person name="Kyrpides N."/>
            <person name="Mikhailova N."/>
            <person name="Marx C."/>
            <person name="Richardson P."/>
        </authorList>
    </citation>
    <scope>NUCLEOTIDE SEQUENCE [LARGE SCALE GENOMIC DNA]</scope>
    <source>
        <strain>ATCC BAA-705 / NCIMB 13946 / BJ001</strain>
    </source>
</reference>
<gene>
    <name evidence="1" type="primary">atpF1</name>
    <name type="ordered locus">Mpop_3367</name>
</gene>
<accession>B1ZJN2</accession>